<gene>
    <name type="primary">MT-ND6</name>
    <name type="synonym">MTND6</name>
    <name type="synonym">NADH6</name>
    <name type="synonym">ND6</name>
</gene>
<reference key="1">
    <citation type="journal article" date="1994" name="Curr. Genet.">
        <title>Intragenic rearrangements in the mitochondrial NADH dehydrogenase subunit 6 gene of vertebrates.</title>
        <authorList>
            <person name="Moum T."/>
            <person name="Willassen N.P."/>
            <person name="Johansen S."/>
        </authorList>
    </citation>
    <scope>NUCLEOTIDE SEQUENCE [GENOMIC DNA]</scope>
</reference>
<reference key="2">
    <citation type="journal article" date="1992" name="Genome">
        <title>The mitochondrial NADH dehydrogenase subunit 6 (ND6) gene in Murres: relevance to phylogenetic and population studies among birds.</title>
        <authorList>
            <person name="Moum T."/>
            <person name="Johansen S."/>
        </authorList>
    </citation>
    <scope>NUCLEOTIDE SEQUENCE [GENOMIC DNA]</scope>
</reference>
<protein>
    <recommendedName>
        <fullName>NADH-ubiquinone oxidoreductase chain 6</fullName>
        <ecNumber>7.1.1.2</ecNumber>
    </recommendedName>
    <alternativeName>
        <fullName>NADH dehydrogenase subunit 6</fullName>
    </alternativeName>
</protein>
<proteinExistence type="inferred from homology"/>
<geneLocation type="mitochondrion"/>
<evidence type="ECO:0000250" key="1"/>
<evidence type="ECO:0000255" key="2"/>
<evidence type="ECO:0000305" key="3"/>
<keyword id="KW-0249">Electron transport</keyword>
<keyword id="KW-0472">Membrane</keyword>
<keyword id="KW-0496">Mitochondrion</keyword>
<keyword id="KW-0520">NAD</keyword>
<keyword id="KW-0679">Respiratory chain</keyword>
<keyword id="KW-1278">Translocase</keyword>
<keyword id="KW-0812">Transmembrane</keyword>
<keyword id="KW-1133">Transmembrane helix</keyword>
<keyword id="KW-0813">Transport</keyword>
<keyword id="KW-0830">Ubiquinone</keyword>
<organism>
    <name type="scientific">Uria lomvia</name>
    <name type="common">Thick-billed murre</name>
    <dbReference type="NCBI Taxonomy" id="28711"/>
    <lineage>
        <taxon>Eukaryota</taxon>
        <taxon>Metazoa</taxon>
        <taxon>Chordata</taxon>
        <taxon>Craniata</taxon>
        <taxon>Vertebrata</taxon>
        <taxon>Euteleostomi</taxon>
        <taxon>Archelosauria</taxon>
        <taxon>Archosauria</taxon>
        <taxon>Dinosauria</taxon>
        <taxon>Saurischia</taxon>
        <taxon>Theropoda</taxon>
        <taxon>Coelurosauria</taxon>
        <taxon>Aves</taxon>
        <taxon>Neognathae</taxon>
        <taxon>Neoaves</taxon>
        <taxon>Charadriiformes</taxon>
        <taxon>Alcidae</taxon>
        <taxon>Uria</taxon>
    </lineage>
</organism>
<feature type="chain" id="PRO_0000118345" description="NADH-ubiquinone oxidoreductase chain 6">
    <location>
        <begin position="1"/>
        <end position="172"/>
    </location>
</feature>
<feature type="transmembrane region" description="Helical" evidence="2">
    <location>
        <begin position="1"/>
        <end position="21"/>
    </location>
</feature>
<feature type="transmembrane region" description="Helical" evidence="2">
    <location>
        <begin position="27"/>
        <end position="47"/>
    </location>
</feature>
<feature type="transmembrane region" description="Helical" evidence="2">
    <location>
        <begin position="48"/>
        <end position="68"/>
    </location>
</feature>
<feature type="transmembrane region" description="Helical" evidence="2">
    <location>
        <begin position="87"/>
        <end position="107"/>
    </location>
</feature>
<feature type="transmembrane region" description="Helical" evidence="2">
    <location>
        <begin position="138"/>
        <end position="158"/>
    </location>
</feature>
<name>NU6M_URILO</name>
<accession>P43208</accession>
<dbReference type="EC" id="7.1.1.2"/>
<dbReference type="EMBL" id="X73914">
    <property type="protein sequence ID" value="CAA52119.1"/>
    <property type="molecule type" value="Genomic_DNA"/>
</dbReference>
<dbReference type="PIR" id="S62167">
    <property type="entry name" value="S62167"/>
</dbReference>
<dbReference type="SMR" id="P43208"/>
<dbReference type="GO" id="GO:0031966">
    <property type="term" value="C:mitochondrial membrane"/>
    <property type="evidence" value="ECO:0007669"/>
    <property type="project" value="UniProtKB-SubCell"/>
</dbReference>
<dbReference type="GO" id="GO:0008137">
    <property type="term" value="F:NADH dehydrogenase (ubiquinone) activity"/>
    <property type="evidence" value="ECO:0007669"/>
    <property type="project" value="UniProtKB-EC"/>
</dbReference>
<dbReference type="Gene3D" id="1.20.120.1200">
    <property type="entry name" value="NADH-ubiquinone/plastoquinone oxidoreductase chain 6, subunit NuoJ"/>
    <property type="match status" value="1"/>
</dbReference>
<dbReference type="InterPro" id="IPR050269">
    <property type="entry name" value="ComplexI_Subunit6"/>
</dbReference>
<dbReference type="InterPro" id="IPR001457">
    <property type="entry name" value="NADH_UbQ/plastoQ_OxRdtase_su6"/>
</dbReference>
<dbReference type="InterPro" id="IPR042106">
    <property type="entry name" value="Nuo/plastoQ_OxRdtase_6_NuoJ"/>
</dbReference>
<dbReference type="PANTHER" id="PTHR11435">
    <property type="entry name" value="NADH UBIQUINONE OXIDOREDUCTASE SUBUNIT ND6"/>
    <property type="match status" value="1"/>
</dbReference>
<dbReference type="PANTHER" id="PTHR11435:SF1">
    <property type="entry name" value="NADH-UBIQUINONE OXIDOREDUCTASE CHAIN 6"/>
    <property type="match status" value="1"/>
</dbReference>
<dbReference type="Pfam" id="PF00499">
    <property type="entry name" value="Oxidored_q3"/>
    <property type="match status" value="1"/>
</dbReference>
<sequence>MTYFVLFLGLCFVLGGLAVASNPSPYYGVVGLVLASVAGCAWLLSLGVSFVSLVLFMVYLGGMLVVFVYSVSLAADPFPEAWGDWRVVGYGMGFVAVLVMGMVVGGFECWDLGVVTVDSVGMFSVRLDFGGVAMFYSCGVGMFLVAGWGLLLTLFVVLELVRGLTRGAIRAV</sequence>
<comment type="function">
    <text evidence="1">Core subunit of the mitochondrial membrane respiratory chain NADH dehydrogenase (Complex I) that is believed to belong to the minimal assembly required for catalysis. Complex I functions in the transfer of electrons from NADH to the respiratory chain. The immediate electron acceptor for the enzyme is believed to be ubiquinone (By similarity).</text>
</comment>
<comment type="catalytic activity">
    <reaction>
        <text>a ubiquinone + NADH + 5 H(+)(in) = a ubiquinol + NAD(+) + 4 H(+)(out)</text>
        <dbReference type="Rhea" id="RHEA:29091"/>
        <dbReference type="Rhea" id="RHEA-COMP:9565"/>
        <dbReference type="Rhea" id="RHEA-COMP:9566"/>
        <dbReference type="ChEBI" id="CHEBI:15378"/>
        <dbReference type="ChEBI" id="CHEBI:16389"/>
        <dbReference type="ChEBI" id="CHEBI:17976"/>
        <dbReference type="ChEBI" id="CHEBI:57540"/>
        <dbReference type="ChEBI" id="CHEBI:57945"/>
        <dbReference type="EC" id="7.1.1.2"/>
    </reaction>
</comment>
<comment type="subcellular location">
    <subcellularLocation>
        <location evidence="3">Mitochondrion membrane</location>
        <topology evidence="3">Multi-pass membrane protein</topology>
    </subcellularLocation>
</comment>
<comment type="similarity">
    <text evidence="3">Belongs to the complex I subunit 6 family.</text>
</comment>